<organism>
    <name type="scientific">Pseudomonas putida (strain ATCC 700007 / DSM 6899 / JCM 31910 / BCRC 17059 / LMG 24140 / F1)</name>
    <dbReference type="NCBI Taxonomy" id="351746"/>
    <lineage>
        <taxon>Bacteria</taxon>
        <taxon>Pseudomonadati</taxon>
        <taxon>Pseudomonadota</taxon>
        <taxon>Gammaproteobacteria</taxon>
        <taxon>Pseudomonadales</taxon>
        <taxon>Pseudomonadaceae</taxon>
        <taxon>Pseudomonas</taxon>
    </lineage>
</organism>
<reference key="1">
    <citation type="submission" date="2007-05" db="EMBL/GenBank/DDBJ databases">
        <title>Complete sequence of Pseudomonas putida F1.</title>
        <authorList>
            <consortium name="US DOE Joint Genome Institute"/>
            <person name="Copeland A."/>
            <person name="Lucas S."/>
            <person name="Lapidus A."/>
            <person name="Barry K."/>
            <person name="Detter J.C."/>
            <person name="Glavina del Rio T."/>
            <person name="Hammon N."/>
            <person name="Israni S."/>
            <person name="Dalin E."/>
            <person name="Tice H."/>
            <person name="Pitluck S."/>
            <person name="Chain P."/>
            <person name="Malfatti S."/>
            <person name="Shin M."/>
            <person name="Vergez L."/>
            <person name="Schmutz J."/>
            <person name="Larimer F."/>
            <person name="Land M."/>
            <person name="Hauser L."/>
            <person name="Kyrpides N."/>
            <person name="Lykidis A."/>
            <person name="Parales R."/>
            <person name="Richardson P."/>
        </authorList>
    </citation>
    <scope>NUCLEOTIDE SEQUENCE [LARGE SCALE GENOMIC DNA]</scope>
    <source>
        <strain>ATCC 700007 / DSM 6899 / JCM 31910 / BCRC 17059 / LMG 24140 / F1</strain>
    </source>
</reference>
<dbReference type="EMBL" id="CP000712">
    <property type="protein sequence ID" value="ABQ79349.1"/>
    <property type="molecule type" value="Genomic_DNA"/>
</dbReference>
<dbReference type="SMR" id="A5W5D9"/>
<dbReference type="KEGG" id="ppf:Pput_3223"/>
<dbReference type="eggNOG" id="COG0291">
    <property type="taxonomic scope" value="Bacteria"/>
</dbReference>
<dbReference type="HOGENOM" id="CLU_169643_1_1_6"/>
<dbReference type="GO" id="GO:0022625">
    <property type="term" value="C:cytosolic large ribosomal subunit"/>
    <property type="evidence" value="ECO:0007669"/>
    <property type="project" value="TreeGrafter"/>
</dbReference>
<dbReference type="GO" id="GO:0003735">
    <property type="term" value="F:structural constituent of ribosome"/>
    <property type="evidence" value="ECO:0007669"/>
    <property type="project" value="InterPro"/>
</dbReference>
<dbReference type="GO" id="GO:0006412">
    <property type="term" value="P:translation"/>
    <property type="evidence" value="ECO:0007669"/>
    <property type="project" value="UniProtKB-UniRule"/>
</dbReference>
<dbReference type="FunFam" id="4.10.410.60:FF:000001">
    <property type="entry name" value="50S ribosomal protein L35"/>
    <property type="match status" value="1"/>
</dbReference>
<dbReference type="Gene3D" id="4.10.410.60">
    <property type="match status" value="1"/>
</dbReference>
<dbReference type="HAMAP" id="MF_00514">
    <property type="entry name" value="Ribosomal_bL35"/>
    <property type="match status" value="1"/>
</dbReference>
<dbReference type="InterPro" id="IPR001706">
    <property type="entry name" value="Ribosomal_bL35"/>
</dbReference>
<dbReference type="InterPro" id="IPR021137">
    <property type="entry name" value="Ribosomal_bL35-like"/>
</dbReference>
<dbReference type="InterPro" id="IPR018265">
    <property type="entry name" value="Ribosomal_bL35_CS"/>
</dbReference>
<dbReference type="InterPro" id="IPR037229">
    <property type="entry name" value="Ribosomal_bL35_sf"/>
</dbReference>
<dbReference type="NCBIfam" id="TIGR00001">
    <property type="entry name" value="rpmI_bact"/>
    <property type="match status" value="1"/>
</dbReference>
<dbReference type="PANTHER" id="PTHR33343">
    <property type="entry name" value="54S RIBOSOMAL PROTEIN BL35M"/>
    <property type="match status" value="1"/>
</dbReference>
<dbReference type="PANTHER" id="PTHR33343:SF1">
    <property type="entry name" value="LARGE RIBOSOMAL SUBUNIT PROTEIN BL35M"/>
    <property type="match status" value="1"/>
</dbReference>
<dbReference type="Pfam" id="PF01632">
    <property type="entry name" value="Ribosomal_L35p"/>
    <property type="match status" value="1"/>
</dbReference>
<dbReference type="PRINTS" id="PR00064">
    <property type="entry name" value="RIBOSOMALL35"/>
</dbReference>
<dbReference type="SUPFAM" id="SSF143034">
    <property type="entry name" value="L35p-like"/>
    <property type="match status" value="1"/>
</dbReference>
<dbReference type="PROSITE" id="PS00936">
    <property type="entry name" value="RIBOSOMAL_L35"/>
    <property type="match status" value="1"/>
</dbReference>
<gene>
    <name evidence="1" type="primary">rpmI</name>
    <name type="ordered locus">Pput_3223</name>
</gene>
<sequence>MPKMKTKSGAAKRFLKTASGFKHKHAFKSHILTKMSTKRKRQLRGASLLHPSDVAKVERMLRVR</sequence>
<comment type="similarity">
    <text evidence="1">Belongs to the bacterial ribosomal protein bL35 family.</text>
</comment>
<name>RL35_PSEP1</name>
<keyword id="KW-0687">Ribonucleoprotein</keyword>
<keyword id="KW-0689">Ribosomal protein</keyword>
<accession>A5W5D9</accession>
<feature type="chain" id="PRO_1000050748" description="Large ribosomal subunit protein bL35">
    <location>
        <begin position="1"/>
        <end position="64"/>
    </location>
</feature>
<proteinExistence type="inferred from homology"/>
<protein>
    <recommendedName>
        <fullName evidence="1">Large ribosomal subunit protein bL35</fullName>
    </recommendedName>
    <alternativeName>
        <fullName evidence="2">50S ribosomal protein L35</fullName>
    </alternativeName>
</protein>
<evidence type="ECO:0000255" key="1">
    <source>
        <dbReference type="HAMAP-Rule" id="MF_00514"/>
    </source>
</evidence>
<evidence type="ECO:0000305" key="2"/>